<dbReference type="EMBL" id="AC008030">
    <property type="protein sequence ID" value="AAG10601.1"/>
    <property type="status" value="ALT_SEQ"/>
    <property type="molecule type" value="Genomic_DNA"/>
</dbReference>
<dbReference type="EMBL" id="AC022455">
    <property type="protein sequence ID" value="AAG52051.1"/>
    <property type="status" value="ALT_SEQ"/>
    <property type="molecule type" value="Genomic_DNA"/>
</dbReference>
<dbReference type="EMBL" id="CP002684">
    <property type="protein sequence ID" value="AEE31153.1"/>
    <property type="molecule type" value="Genomic_DNA"/>
</dbReference>
<dbReference type="EMBL" id="CP002684">
    <property type="protein sequence ID" value="AEE31154.1"/>
    <property type="molecule type" value="Genomic_DNA"/>
</dbReference>
<dbReference type="EMBL" id="AF361607">
    <property type="protein sequence ID" value="AAK32775.1"/>
    <property type="molecule type" value="mRNA"/>
</dbReference>
<dbReference type="EMBL" id="AY074843">
    <property type="protein sequence ID" value="AAL69541.1"/>
    <property type="molecule type" value="mRNA"/>
</dbReference>
<dbReference type="EMBL" id="AK175631">
    <property type="protein sequence ID" value="BAD43394.1"/>
    <property type="molecule type" value="mRNA"/>
</dbReference>
<dbReference type="EMBL" id="AK230374">
    <property type="protein sequence ID" value="BAF02173.1"/>
    <property type="molecule type" value="mRNA"/>
</dbReference>
<dbReference type="PIR" id="C86423">
    <property type="entry name" value="C86423"/>
</dbReference>
<dbReference type="RefSeq" id="NP_564342.1">
    <property type="nucleotide sequence ID" value="NM_102735.3"/>
</dbReference>
<dbReference type="RefSeq" id="NP_973937.1">
    <property type="nucleotide sequence ID" value="NM_202208.1"/>
</dbReference>
<dbReference type="SMR" id="Q9ASX9"/>
<dbReference type="BioGRID" id="926799">
    <property type="interactions" value="5"/>
</dbReference>
<dbReference type="FunCoup" id="Q9ASX9">
    <property type="interactions" value="1504"/>
</dbReference>
<dbReference type="IntAct" id="Q9ASX9">
    <property type="interactions" value="6"/>
</dbReference>
<dbReference type="STRING" id="3702.Q9ASX9"/>
<dbReference type="PaxDb" id="3702-AT1G29950.2"/>
<dbReference type="EnsemblPlants" id="AT1G29950.1">
    <property type="protein sequence ID" value="AT1G29950.1"/>
    <property type="gene ID" value="AT1G29950"/>
</dbReference>
<dbReference type="EnsemblPlants" id="AT1G29950.2">
    <property type="protein sequence ID" value="AT1G29950.2"/>
    <property type="gene ID" value="AT1G29950"/>
</dbReference>
<dbReference type="GeneID" id="6240759"/>
<dbReference type="Gramene" id="AT1G29950.1">
    <property type="protein sequence ID" value="AT1G29950.1"/>
    <property type="gene ID" value="AT1G29950"/>
</dbReference>
<dbReference type="Gramene" id="AT1G29950.2">
    <property type="protein sequence ID" value="AT1G29950.2"/>
    <property type="gene ID" value="AT1G29950"/>
</dbReference>
<dbReference type="KEGG" id="ath:AT1G29950"/>
<dbReference type="Araport" id="AT1G29950"/>
<dbReference type="TAIR" id="AT1G29950">
    <property type="gene designation" value="SACL3"/>
</dbReference>
<dbReference type="eggNOG" id="ENOG502R4DP">
    <property type="taxonomic scope" value="Eukaryota"/>
</dbReference>
<dbReference type="HOGENOM" id="CLU_093993_0_0_1"/>
<dbReference type="InParanoid" id="Q9ASX9"/>
<dbReference type="OMA" id="PDSCSNY"/>
<dbReference type="PhylomeDB" id="Q9ASX9"/>
<dbReference type="PRO" id="PR:Q9ASX9"/>
<dbReference type="Proteomes" id="UP000006548">
    <property type="component" value="Chromosome 1"/>
</dbReference>
<dbReference type="ExpressionAtlas" id="Q9ASX9">
    <property type="expression patterns" value="baseline and differential"/>
</dbReference>
<dbReference type="GO" id="GO:0005634">
    <property type="term" value="C:nucleus"/>
    <property type="evidence" value="ECO:0007669"/>
    <property type="project" value="UniProtKB-SubCell"/>
</dbReference>
<dbReference type="GO" id="GO:0003677">
    <property type="term" value="F:DNA binding"/>
    <property type="evidence" value="ECO:0007669"/>
    <property type="project" value="UniProtKB-KW"/>
</dbReference>
<dbReference type="GO" id="GO:0003700">
    <property type="term" value="F:DNA-binding transcription factor activity"/>
    <property type="evidence" value="ECO:0000250"/>
    <property type="project" value="TAIR"/>
</dbReference>
<dbReference type="GO" id="GO:0046983">
    <property type="term" value="F:protein dimerization activity"/>
    <property type="evidence" value="ECO:0007669"/>
    <property type="project" value="InterPro"/>
</dbReference>
<dbReference type="GO" id="GO:0006355">
    <property type="term" value="P:regulation of DNA-templated transcription"/>
    <property type="evidence" value="ECO:0000304"/>
    <property type="project" value="TAIR"/>
</dbReference>
<dbReference type="CDD" id="cd18917">
    <property type="entry name" value="bHLH_AtSAC51_like"/>
    <property type="match status" value="1"/>
</dbReference>
<dbReference type="Gene3D" id="4.10.280.10">
    <property type="entry name" value="Helix-loop-helix DNA-binding domain"/>
    <property type="match status" value="1"/>
</dbReference>
<dbReference type="InterPro" id="IPR011598">
    <property type="entry name" value="bHLH_dom"/>
</dbReference>
<dbReference type="InterPro" id="IPR036638">
    <property type="entry name" value="HLH_DNA-bd_sf"/>
</dbReference>
<dbReference type="InterPro" id="IPR037546">
    <property type="entry name" value="SAC51-like"/>
</dbReference>
<dbReference type="PANTHER" id="PTHR36066:SF11">
    <property type="entry name" value="TRANSCRIPTION FACTOR BHLH144"/>
    <property type="match status" value="1"/>
</dbReference>
<dbReference type="PANTHER" id="PTHR36066">
    <property type="entry name" value="TRANSCRIPTION FACTOR BHLH145"/>
    <property type="match status" value="1"/>
</dbReference>
<dbReference type="SUPFAM" id="SSF47459">
    <property type="entry name" value="HLH, helix-loop-helix DNA-binding domain"/>
    <property type="match status" value="1"/>
</dbReference>
<dbReference type="PROSITE" id="PS50888">
    <property type="entry name" value="BHLH"/>
    <property type="match status" value="1"/>
</dbReference>
<proteinExistence type="evidence at protein level"/>
<name>BH144_ARATH</name>
<accession>Q9ASX9</accession>
<accession>Q681I6</accession>
<accession>Q9FXG5</accession>
<sequence length="251" mass="27822">MQNNQFPHFSDEVGDRNMHNPYASGSSYDALFPPCAKLPYHGVELQPSAVCPKNFVIFDQTYDRSQVMYHPELTHKLMNTPSLNNLASTFQNEYVGGSYGNYGNYEQEVSSSYQEDPNEIDALLSADEDYEENDDNEGEEDGGDSEEVSTARTSSRDYGNTTAESCCSSYGYNNNNNNNSRKQSLSGSASSSNNDGKGRKKMKKMMGVLRRIVPGGEQMNTACVLDEAVQYLKSLKIEAQKLGVGHFSNQS</sequence>
<organism>
    <name type="scientific">Arabidopsis thaliana</name>
    <name type="common">Mouse-ear cress</name>
    <dbReference type="NCBI Taxonomy" id="3702"/>
    <lineage>
        <taxon>Eukaryota</taxon>
        <taxon>Viridiplantae</taxon>
        <taxon>Streptophyta</taxon>
        <taxon>Embryophyta</taxon>
        <taxon>Tracheophyta</taxon>
        <taxon>Spermatophyta</taxon>
        <taxon>Magnoliopsida</taxon>
        <taxon>eudicotyledons</taxon>
        <taxon>Gunneridae</taxon>
        <taxon>Pentapetalae</taxon>
        <taxon>rosids</taxon>
        <taxon>malvids</taxon>
        <taxon>Brassicales</taxon>
        <taxon>Brassicaceae</taxon>
        <taxon>Camelineae</taxon>
        <taxon>Arabidopsis</taxon>
    </lineage>
</organism>
<gene>
    <name type="primary">BHLH144</name>
    <name type="synonym">EN130</name>
    <name type="ordered locus">At1g29950</name>
    <name type="ORF">F1N18.24</name>
    <name type="ORF">T1P2.2</name>
</gene>
<protein>
    <recommendedName>
        <fullName>Transcription factor bHLH144</fullName>
    </recommendedName>
    <alternativeName>
        <fullName>Basic helix-loop-helix protein 144</fullName>
        <shortName>AtbHLH144</shortName>
        <shortName>bHLH 144</shortName>
    </alternativeName>
    <alternativeName>
        <fullName>Transcription factor EN 130</fullName>
    </alternativeName>
    <alternativeName>
        <fullName>bHLH transcription factor bHLH144</fullName>
    </alternativeName>
</protein>
<evidence type="ECO:0000255" key="1">
    <source>
        <dbReference type="PROSITE-ProRule" id="PRU00981"/>
    </source>
</evidence>
<evidence type="ECO:0000256" key="2">
    <source>
        <dbReference type="SAM" id="MobiDB-lite"/>
    </source>
</evidence>
<evidence type="ECO:0000269" key="3">
    <source>
    </source>
</evidence>
<evidence type="ECO:0000305" key="4"/>
<keyword id="KW-0238">DNA-binding</keyword>
<keyword id="KW-0539">Nucleus</keyword>
<keyword id="KW-1185">Reference proteome</keyword>
<keyword id="KW-0804">Transcription</keyword>
<keyword id="KW-0805">Transcription regulation</keyword>
<reference key="1">
    <citation type="journal article" date="2000" name="Nature">
        <title>Sequence and analysis of chromosome 1 of the plant Arabidopsis thaliana.</title>
        <authorList>
            <person name="Theologis A."/>
            <person name="Ecker J.R."/>
            <person name="Palm C.J."/>
            <person name="Federspiel N.A."/>
            <person name="Kaul S."/>
            <person name="White O."/>
            <person name="Alonso J."/>
            <person name="Altafi H."/>
            <person name="Araujo R."/>
            <person name="Bowman C.L."/>
            <person name="Brooks S.Y."/>
            <person name="Buehler E."/>
            <person name="Chan A."/>
            <person name="Chao Q."/>
            <person name="Chen H."/>
            <person name="Cheuk R.F."/>
            <person name="Chin C.W."/>
            <person name="Chung M.K."/>
            <person name="Conn L."/>
            <person name="Conway A.B."/>
            <person name="Conway A.R."/>
            <person name="Creasy T.H."/>
            <person name="Dewar K."/>
            <person name="Dunn P."/>
            <person name="Etgu P."/>
            <person name="Feldblyum T.V."/>
            <person name="Feng J.-D."/>
            <person name="Fong B."/>
            <person name="Fujii C.Y."/>
            <person name="Gill J.E."/>
            <person name="Goldsmith A.D."/>
            <person name="Haas B."/>
            <person name="Hansen N.F."/>
            <person name="Hughes B."/>
            <person name="Huizar L."/>
            <person name="Hunter J.L."/>
            <person name="Jenkins J."/>
            <person name="Johnson-Hopson C."/>
            <person name="Khan S."/>
            <person name="Khaykin E."/>
            <person name="Kim C.J."/>
            <person name="Koo H.L."/>
            <person name="Kremenetskaia I."/>
            <person name="Kurtz D.B."/>
            <person name="Kwan A."/>
            <person name="Lam B."/>
            <person name="Langin-Hooper S."/>
            <person name="Lee A."/>
            <person name="Lee J.M."/>
            <person name="Lenz C.A."/>
            <person name="Li J.H."/>
            <person name="Li Y.-P."/>
            <person name="Lin X."/>
            <person name="Liu S.X."/>
            <person name="Liu Z.A."/>
            <person name="Luros J.S."/>
            <person name="Maiti R."/>
            <person name="Marziali A."/>
            <person name="Militscher J."/>
            <person name="Miranda M."/>
            <person name="Nguyen M."/>
            <person name="Nierman W.C."/>
            <person name="Osborne B.I."/>
            <person name="Pai G."/>
            <person name="Peterson J."/>
            <person name="Pham P.K."/>
            <person name="Rizzo M."/>
            <person name="Rooney T."/>
            <person name="Rowley D."/>
            <person name="Sakano H."/>
            <person name="Salzberg S.L."/>
            <person name="Schwartz J.R."/>
            <person name="Shinn P."/>
            <person name="Southwick A.M."/>
            <person name="Sun H."/>
            <person name="Tallon L.J."/>
            <person name="Tambunga G."/>
            <person name="Toriumi M.J."/>
            <person name="Town C.D."/>
            <person name="Utterback T."/>
            <person name="Van Aken S."/>
            <person name="Vaysberg M."/>
            <person name="Vysotskaia V.S."/>
            <person name="Walker M."/>
            <person name="Wu D."/>
            <person name="Yu G."/>
            <person name="Fraser C.M."/>
            <person name="Venter J.C."/>
            <person name="Davis R.W."/>
        </authorList>
    </citation>
    <scope>NUCLEOTIDE SEQUENCE [LARGE SCALE GENOMIC DNA]</scope>
    <source>
        <strain>cv. Columbia</strain>
    </source>
</reference>
<reference key="2">
    <citation type="journal article" date="2017" name="Plant J.">
        <title>Araport11: a complete reannotation of the Arabidopsis thaliana reference genome.</title>
        <authorList>
            <person name="Cheng C.Y."/>
            <person name="Krishnakumar V."/>
            <person name="Chan A.P."/>
            <person name="Thibaud-Nissen F."/>
            <person name="Schobel S."/>
            <person name="Town C.D."/>
        </authorList>
    </citation>
    <scope>GENOME REANNOTATION</scope>
    <source>
        <strain>cv. Columbia</strain>
    </source>
</reference>
<reference key="3">
    <citation type="journal article" date="2003" name="Science">
        <title>Empirical analysis of transcriptional activity in the Arabidopsis genome.</title>
        <authorList>
            <person name="Yamada K."/>
            <person name="Lim J."/>
            <person name="Dale J.M."/>
            <person name="Chen H."/>
            <person name="Shinn P."/>
            <person name="Palm C.J."/>
            <person name="Southwick A.M."/>
            <person name="Wu H.C."/>
            <person name="Kim C.J."/>
            <person name="Nguyen M."/>
            <person name="Pham P.K."/>
            <person name="Cheuk R.F."/>
            <person name="Karlin-Newmann G."/>
            <person name="Liu S.X."/>
            <person name="Lam B."/>
            <person name="Sakano H."/>
            <person name="Wu T."/>
            <person name="Yu G."/>
            <person name="Miranda M."/>
            <person name="Quach H.L."/>
            <person name="Tripp M."/>
            <person name="Chang C.H."/>
            <person name="Lee J.M."/>
            <person name="Toriumi M.J."/>
            <person name="Chan M.M."/>
            <person name="Tang C.C."/>
            <person name="Onodera C.S."/>
            <person name="Deng J.M."/>
            <person name="Akiyama K."/>
            <person name="Ansari Y."/>
            <person name="Arakawa T."/>
            <person name="Banh J."/>
            <person name="Banno F."/>
            <person name="Bowser L."/>
            <person name="Brooks S.Y."/>
            <person name="Carninci P."/>
            <person name="Chao Q."/>
            <person name="Choy N."/>
            <person name="Enju A."/>
            <person name="Goldsmith A.D."/>
            <person name="Gurjal M."/>
            <person name="Hansen N.F."/>
            <person name="Hayashizaki Y."/>
            <person name="Johnson-Hopson C."/>
            <person name="Hsuan V.W."/>
            <person name="Iida K."/>
            <person name="Karnes M."/>
            <person name="Khan S."/>
            <person name="Koesema E."/>
            <person name="Ishida J."/>
            <person name="Jiang P.X."/>
            <person name="Jones T."/>
            <person name="Kawai J."/>
            <person name="Kamiya A."/>
            <person name="Meyers C."/>
            <person name="Nakajima M."/>
            <person name="Narusaka M."/>
            <person name="Seki M."/>
            <person name="Sakurai T."/>
            <person name="Satou M."/>
            <person name="Tamse R."/>
            <person name="Vaysberg M."/>
            <person name="Wallender E.K."/>
            <person name="Wong C."/>
            <person name="Yamamura Y."/>
            <person name="Yuan S."/>
            <person name="Shinozaki K."/>
            <person name="Davis R.W."/>
            <person name="Theologis A."/>
            <person name="Ecker J.R."/>
        </authorList>
    </citation>
    <scope>NUCLEOTIDE SEQUENCE [LARGE SCALE MRNA]</scope>
    <source>
        <strain>cv. Columbia</strain>
    </source>
</reference>
<reference key="4">
    <citation type="submission" date="2006-07" db="EMBL/GenBank/DDBJ databases">
        <title>Large-scale analysis of RIKEN Arabidopsis full-length (RAFL) cDNAs.</title>
        <authorList>
            <person name="Totoki Y."/>
            <person name="Seki M."/>
            <person name="Ishida J."/>
            <person name="Nakajima M."/>
            <person name="Enju A."/>
            <person name="Kamiya A."/>
            <person name="Narusaka M."/>
            <person name="Shin-i T."/>
            <person name="Nakagawa M."/>
            <person name="Sakamoto N."/>
            <person name="Oishi K."/>
            <person name="Kohara Y."/>
            <person name="Kobayashi M."/>
            <person name="Toyoda A."/>
            <person name="Sakaki Y."/>
            <person name="Sakurai T."/>
            <person name="Iida K."/>
            <person name="Akiyama K."/>
            <person name="Satou M."/>
            <person name="Toyoda T."/>
            <person name="Konagaya A."/>
            <person name="Carninci P."/>
            <person name="Kawai J."/>
            <person name="Hayashizaki Y."/>
            <person name="Shinozaki K."/>
        </authorList>
    </citation>
    <scope>NUCLEOTIDE SEQUENCE [LARGE SCALE MRNA]</scope>
    <source>
        <strain>cv. Columbia</strain>
    </source>
</reference>
<reference key="5">
    <citation type="journal article" date="2003" name="Plant Cell">
        <title>The Arabidopsis basic/helix-loop-helix transcription factor family.</title>
        <authorList>
            <person name="Toledo-Ortiz G."/>
            <person name="Huq E."/>
            <person name="Quail P.H."/>
        </authorList>
    </citation>
    <scope>GENE FAMILY</scope>
    <scope>NOMENCLATURE</scope>
</reference>
<reference key="6">
    <citation type="journal article" date="2003" name="Plant Cell">
        <title>Update on the basic helix-loop-helix transcription factor gene family in Arabidopsis thaliana.</title>
        <authorList>
            <person name="Bailey P.C."/>
            <person name="Martin C."/>
            <person name="Toledo-Ortiz G."/>
            <person name="Quail P.H."/>
            <person name="Huq E."/>
            <person name="Heim M.A."/>
            <person name="Jakoby M."/>
            <person name="Werber M."/>
            <person name="Weisshaar B."/>
        </authorList>
    </citation>
    <scope>GENE FAMILY</scope>
    <scope>NOMENCLATURE</scope>
</reference>
<reference key="7">
    <citation type="journal article" date="2007" name="Development">
        <title>Regulation of the Arabidopsis root vascular initial population by LONESOME HIGHWAY.</title>
        <authorList>
            <person name="Ohashi-Ito K."/>
            <person name="Bergmann D.C."/>
        </authorList>
    </citation>
    <scope>INTERACTION WITH LHW</scope>
</reference>
<comment type="subunit">
    <text evidence="3 4">Homodimer (Probable). Interacts with LHW.</text>
</comment>
<comment type="interaction">
    <interactant intactId="EBI-15195383">
        <id>Q9ASX9</id>
    </interactant>
    <interactant intactId="EBI-4477059">
        <id>Q9FGB0</id>
        <label>BHLH145</label>
    </interactant>
    <organismsDiffer>false</organismsDiffer>
    <experiments>3</experiments>
</comment>
<comment type="subcellular location">
    <subcellularLocation>
        <location evidence="1">Nucleus</location>
    </subcellularLocation>
</comment>
<comment type="sequence caution" evidence="4">
    <conflict type="erroneous gene model prediction">
        <sequence resource="EMBL-CDS" id="AAG10601"/>
    </conflict>
</comment>
<comment type="sequence caution" evidence="4">
    <conflict type="erroneous gene model prediction">
        <sequence resource="EMBL-CDS" id="AAG52051"/>
    </conflict>
</comment>
<feature type="chain" id="PRO_0000358822" description="Transcription factor bHLH144">
    <location>
        <begin position="1"/>
        <end position="251"/>
    </location>
</feature>
<feature type="domain" description="bHLH" evidence="1">
    <location>
        <begin position="186"/>
        <end position="235"/>
    </location>
</feature>
<feature type="region of interest" description="Disordered" evidence="2">
    <location>
        <begin position="1"/>
        <end position="20"/>
    </location>
</feature>
<feature type="region of interest" description="Disordered" evidence="2">
    <location>
        <begin position="130"/>
        <end position="161"/>
    </location>
</feature>
<feature type="region of interest" description="Disordered" evidence="2">
    <location>
        <begin position="173"/>
        <end position="202"/>
    </location>
</feature>
<feature type="compositionally biased region" description="Basic and acidic residues" evidence="2">
    <location>
        <begin position="9"/>
        <end position="18"/>
    </location>
</feature>
<feature type="compositionally biased region" description="Acidic residues" evidence="2">
    <location>
        <begin position="130"/>
        <end position="147"/>
    </location>
</feature>
<feature type="compositionally biased region" description="Polar residues" evidence="2">
    <location>
        <begin position="148"/>
        <end position="161"/>
    </location>
</feature>
<feature type="compositionally biased region" description="Low complexity" evidence="2">
    <location>
        <begin position="173"/>
        <end position="192"/>
    </location>
</feature>